<sequence length="316" mass="37215">MDTIKIFNHGEFDTIRNELVNLLKVVKWNTINSNVTVSSTDTIDISDCIREILYKQFKNVRNIEVSSDISFIKYNRFNDTTLTDDNVGYYLVIYLNRTKSVKTLIYPTPETVITSSEDIMFSKSLNFRFENVKRDYKLVMCSISLTYKPSICRIQYDNNKYLDISDSQECNNICYCVITMDPHHLIDLETICVLVDKSGKCLLVNEFYIRFRKNHIYNSFADLCMDHIFELPNTKELFTLRNDDGRNIAWDNDKLESGNNTWIPKTDDEYKFLSKLMNIAKFNNTKFDYYVLVGDTDPCTVFTFKVTKYYINLNYE</sequence>
<accession>P21038</accession>
<feature type="chain" id="PRO_0000099377" description="Protein C4">
    <location>
        <begin position="1"/>
        <end position="316"/>
    </location>
</feature>
<keyword id="KW-0244">Early protein</keyword>
<keyword id="KW-1035">Host cytoplasm</keyword>
<keyword id="KW-1048">Host nucleus</keyword>
<keyword id="KW-1185">Reference proteome</keyword>
<protein>
    <recommendedName>
        <fullName>Protein C4</fullName>
    </recommendedName>
</protein>
<organismHost>
    <name type="scientific">Homo sapiens</name>
    <name type="common">Human</name>
    <dbReference type="NCBI Taxonomy" id="9606"/>
</organismHost>
<reference key="1">
    <citation type="journal article" date="1990" name="Virology">
        <title>The complete DNA sequence of vaccinia virus.</title>
        <authorList>
            <person name="Goebel S.J."/>
            <person name="Johnson G.P."/>
            <person name="Perkus M.E."/>
            <person name="Davis S.W."/>
            <person name="Winslow J.P."/>
            <person name="Paoletti E."/>
        </authorList>
    </citation>
    <scope>NUCLEOTIDE SEQUENCE [LARGE SCALE GENOMIC DNA]</scope>
</reference>
<reference key="2">
    <citation type="journal article" date="1990" name="Virology">
        <title>Appendix to 'The complete DNA sequence of vaccinia virus'.</title>
        <authorList>
            <person name="Goebel S.J."/>
            <person name="Johnson G.P."/>
            <person name="Perkus M.E."/>
            <person name="Davis S.W."/>
            <person name="Winslow J.P."/>
            <person name="Paoletti E."/>
        </authorList>
    </citation>
    <scope>NUCLEOTIDE SEQUENCE [LARGE SCALE GENOMIC DNA]</scope>
</reference>
<organism>
    <name type="scientific">Vaccinia virus (strain Copenhagen)</name>
    <name type="common">VACV</name>
    <dbReference type="NCBI Taxonomy" id="10249"/>
    <lineage>
        <taxon>Viruses</taxon>
        <taxon>Varidnaviria</taxon>
        <taxon>Bamfordvirae</taxon>
        <taxon>Nucleocytoviricota</taxon>
        <taxon>Pokkesviricetes</taxon>
        <taxon>Chitovirales</taxon>
        <taxon>Poxviridae</taxon>
        <taxon>Chordopoxvirinae</taxon>
        <taxon>Orthopoxvirus</taxon>
        <taxon>Vaccinia virus</taxon>
    </lineage>
</organism>
<proteinExistence type="inferred from homology"/>
<name>PG031_VACCC</name>
<gene>
    <name type="primary">OPG031</name>
    <name type="synonym">C4L</name>
</gene>
<dbReference type="EMBL" id="M35027">
    <property type="protein sequence ID" value="AAA47996.1"/>
    <property type="molecule type" value="Genomic_DNA"/>
</dbReference>
<dbReference type="PIR" id="A42504">
    <property type="entry name" value="A42504"/>
</dbReference>
<dbReference type="SMR" id="P21038"/>
<dbReference type="Proteomes" id="UP000008269">
    <property type="component" value="Segment"/>
</dbReference>
<dbReference type="GO" id="GO:0030430">
    <property type="term" value="C:host cell cytoplasm"/>
    <property type="evidence" value="ECO:0007669"/>
    <property type="project" value="UniProtKB-SubCell"/>
</dbReference>
<dbReference type="GO" id="GO:0042025">
    <property type="term" value="C:host cell nucleus"/>
    <property type="evidence" value="ECO:0007669"/>
    <property type="project" value="UniProtKB-SubCell"/>
</dbReference>
<dbReference type="InterPro" id="IPR005004">
    <property type="entry name" value="Poxvirus_C4/C10"/>
</dbReference>
<dbReference type="Pfam" id="PF03336">
    <property type="entry name" value="Pox_C4_C10"/>
    <property type="match status" value="1"/>
</dbReference>
<dbReference type="PIRSF" id="PIRSF003698">
    <property type="entry name" value="VAC_C10L"/>
    <property type="match status" value="1"/>
</dbReference>
<comment type="function">
    <text evidence="1">Plays a role in the inhibition of host NF-kappa-B activation. Mechanistically, blocks the subunit p65/RELA translocation into the host nucleus.</text>
</comment>
<comment type="subcellular location">
    <subcellularLocation>
        <location evidence="1">Host cytoplasm</location>
    </subcellularLocation>
    <subcellularLocation>
        <location evidence="1">Host nucleus</location>
    </subcellularLocation>
</comment>
<comment type="induction">
    <text evidence="1">Expressed in the early phase of the viral replicative cycle.</text>
</comment>
<comment type="similarity">
    <text evidence="2">Belongs to the poxviridae OPG031 protein family.</text>
</comment>
<evidence type="ECO:0000250" key="1">
    <source>
        <dbReference type="UniProtKB" id="P17370"/>
    </source>
</evidence>
<evidence type="ECO:0000305" key="2"/>